<feature type="chain" id="PRO_1000080648" description="Ketol-acid reductoisomerase (NADP(+))">
    <location>
        <begin position="1"/>
        <end position="334"/>
    </location>
</feature>
<feature type="domain" description="KARI N-terminal Rossmann" evidence="2">
    <location>
        <begin position="1"/>
        <end position="181"/>
    </location>
</feature>
<feature type="domain" description="KARI C-terminal knotted" evidence="3">
    <location>
        <begin position="182"/>
        <end position="327"/>
    </location>
</feature>
<feature type="active site" evidence="1">
    <location>
        <position position="107"/>
    </location>
</feature>
<feature type="binding site" evidence="1">
    <location>
        <begin position="25"/>
        <end position="28"/>
    </location>
    <ligand>
        <name>NADP(+)</name>
        <dbReference type="ChEBI" id="CHEBI:58349"/>
    </ligand>
</feature>
<feature type="binding site" evidence="1">
    <location>
        <position position="48"/>
    </location>
    <ligand>
        <name>NADP(+)</name>
        <dbReference type="ChEBI" id="CHEBI:58349"/>
    </ligand>
</feature>
<feature type="binding site" evidence="1">
    <location>
        <position position="52"/>
    </location>
    <ligand>
        <name>NADP(+)</name>
        <dbReference type="ChEBI" id="CHEBI:58349"/>
    </ligand>
</feature>
<feature type="binding site" evidence="1">
    <location>
        <begin position="82"/>
        <end position="85"/>
    </location>
    <ligand>
        <name>NADP(+)</name>
        <dbReference type="ChEBI" id="CHEBI:58349"/>
    </ligand>
</feature>
<feature type="binding site" evidence="1">
    <location>
        <position position="133"/>
    </location>
    <ligand>
        <name>NADP(+)</name>
        <dbReference type="ChEBI" id="CHEBI:58349"/>
    </ligand>
</feature>
<feature type="binding site" evidence="1">
    <location>
        <position position="190"/>
    </location>
    <ligand>
        <name>Mg(2+)</name>
        <dbReference type="ChEBI" id="CHEBI:18420"/>
        <label>1</label>
    </ligand>
</feature>
<feature type="binding site" evidence="1">
    <location>
        <position position="190"/>
    </location>
    <ligand>
        <name>Mg(2+)</name>
        <dbReference type="ChEBI" id="CHEBI:18420"/>
        <label>2</label>
    </ligand>
</feature>
<feature type="binding site" evidence="1">
    <location>
        <position position="194"/>
    </location>
    <ligand>
        <name>Mg(2+)</name>
        <dbReference type="ChEBI" id="CHEBI:18420"/>
        <label>1</label>
    </ligand>
</feature>
<feature type="binding site" evidence="1">
    <location>
        <position position="226"/>
    </location>
    <ligand>
        <name>Mg(2+)</name>
        <dbReference type="ChEBI" id="CHEBI:18420"/>
        <label>2</label>
    </ligand>
</feature>
<feature type="binding site" evidence="1">
    <location>
        <position position="230"/>
    </location>
    <ligand>
        <name>Mg(2+)</name>
        <dbReference type="ChEBI" id="CHEBI:18420"/>
        <label>2</label>
    </ligand>
</feature>
<feature type="binding site" evidence="1">
    <location>
        <position position="251"/>
    </location>
    <ligand>
        <name>substrate</name>
    </ligand>
</feature>
<dbReference type="EC" id="1.1.1.86" evidence="1"/>
<dbReference type="EMBL" id="CP000703">
    <property type="protein sequence ID" value="ABQ49875.1"/>
    <property type="molecule type" value="Genomic_DNA"/>
</dbReference>
<dbReference type="RefSeq" id="WP_000214552.1">
    <property type="nucleotide sequence ID" value="NC_009487.1"/>
</dbReference>
<dbReference type="SMR" id="A5IUK2"/>
<dbReference type="KEGG" id="saj:SaurJH9_2093"/>
<dbReference type="HOGENOM" id="CLU_033821_0_1_9"/>
<dbReference type="UniPathway" id="UPA00047">
    <property type="reaction ID" value="UER00056"/>
</dbReference>
<dbReference type="UniPathway" id="UPA00049">
    <property type="reaction ID" value="UER00060"/>
</dbReference>
<dbReference type="GO" id="GO:0005829">
    <property type="term" value="C:cytosol"/>
    <property type="evidence" value="ECO:0007669"/>
    <property type="project" value="TreeGrafter"/>
</dbReference>
<dbReference type="GO" id="GO:0004455">
    <property type="term" value="F:ketol-acid reductoisomerase activity"/>
    <property type="evidence" value="ECO:0007669"/>
    <property type="project" value="UniProtKB-UniRule"/>
</dbReference>
<dbReference type="GO" id="GO:0000287">
    <property type="term" value="F:magnesium ion binding"/>
    <property type="evidence" value="ECO:0007669"/>
    <property type="project" value="UniProtKB-UniRule"/>
</dbReference>
<dbReference type="GO" id="GO:0050661">
    <property type="term" value="F:NADP binding"/>
    <property type="evidence" value="ECO:0007669"/>
    <property type="project" value="InterPro"/>
</dbReference>
<dbReference type="GO" id="GO:0009097">
    <property type="term" value="P:isoleucine biosynthetic process"/>
    <property type="evidence" value="ECO:0007669"/>
    <property type="project" value="UniProtKB-UniRule"/>
</dbReference>
<dbReference type="GO" id="GO:0009099">
    <property type="term" value="P:L-valine biosynthetic process"/>
    <property type="evidence" value="ECO:0007669"/>
    <property type="project" value="UniProtKB-UniRule"/>
</dbReference>
<dbReference type="FunFam" id="3.40.50.720:FF:000023">
    <property type="entry name" value="Ketol-acid reductoisomerase (NADP(+))"/>
    <property type="match status" value="1"/>
</dbReference>
<dbReference type="Gene3D" id="6.10.240.10">
    <property type="match status" value="1"/>
</dbReference>
<dbReference type="Gene3D" id="3.40.50.720">
    <property type="entry name" value="NAD(P)-binding Rossmann-like Domain"/>
    <property type="match status" value="1"/>
</dbReference>
<dbReference type="HAMAP" id="MF_00435">
    <property type="entry name" value="IlvC"/>
    <property type="match status" value="1"/>
</dbReference>
<dbReference type="InterPro" id="IPR008927">
    <property type="entry name" value="6-PGluconate_DH-like_C_sf"/>
</dbReference>
<dbReference type="InterPro" id="IPR013023">
    <property type="entry name" value="KARI"/>
</dbReference>
<dbReference type="InterPro" id="IPR000506">
    <property type="entry name" value="KARI_C"/>
</dbReference>
<dbReference type="InterPro" id="IPR013116">
    <property type="entry name" value="KARI_N"/>
</dbReference>
<dbReference type="InterPro" id="IPR014359">
    <property type="entry name" value="KARI_prok"/>
</dbReference>
<dbReference type="InterPro" id="IPR036291">
    <property type="entry name" value="NAD(P)-bd_dom_sf"/>
</dbReference>
<dbReference type="NCBIfam" id="TIGR00465">
    <property type="entry name" value="ilvC"/>
    <property type="match status" value="1"/>
</dbReference>
<dbReference type="NCBIfam" id="NF004017">
    <property type="entry name" value="PRK05479.1"/>
    <property type="match status" value="1"/>
</dbReference>
<dbReference type="NCBIfam" id="NF009940">
    <property type="entry name" value="PRK13403.1"/>
    <property type="match status" value="1"/>
</dbReference>
<dbReference type="PANTHER" id="PTHR21371">
    <property type="entry name" value="KETOL-ACID REDUCTOISOMERASE, MITOCHONDRIAL"/>
    <property type="match status" value="1"/>
</dbReference>
<dbReference type="PANTHER" id="PTHR21371:SF1">
    <property type="entry name" value="KETOL-ACID REDUCTOISOMERASE, MITOCHONDRIAL"/>
    <property type="match status" value="1"/>
</dbReference>
<dbReference type="Pfam" id="PF01450">
    <property type="entry name" value="KARI_C"/>
    <property type="match status" value="1"/>
</dbReference>
<dbReference type="Pfam" id="PF07991">
    <property type="entry name" value="KARI_N"/>
    <property type="match status" value="1"/>
</dbReference>
<dbReference type="PIRSF" id="PIRSF000116">
    <property type="entry name" value="IlvC_gammaproteo"/>
    <property type="match status" value="1"/>
</dbReference>
<dbReference type="SUPFAM" id="SSF48179">
    <property type="entry name" value="6-phosphogluconate dehydrogenase C-terminal domain-like"/>
    <property type="match status" value="1"/>
</dbReference>
<dbReference type="SUPFAM" id="SSF51735">
    <property type="entry name" value="NAD(P)-binding Rossmann-fold domains"/>
    <property type="match status" value="1"/>
</dbReference>
<dbReference type="PROSITE" id="PS51851">
    <property type="entry name" value="KARI_C"/>
    <property type="match status" value="1"/>
</dbReference>
<dbReference type="PROSITE" id="PS51850">
    <property type="entry name" value="KARI_N"/>
    <property type="match status" value="1"/>
</dbReference>
<evidence type="ECO:0000255" key="1">
    <source>
        <dbReference type="HAMAP-Rule" id="MF_00435"/>
    </source>
</evidence>
<evidence type="ECO:0000255" key="2">
    <source>
        <dbReference type="PROSITE-ProRule" id="PRU01197"/>
    </source>
</evidence>
<evidence type="ECO:0000255" key="3">
    <source>
        <dbReference type="PROSITE-ProRule" id="PRU01198"/>
    </source>
</evidence>
<accession>A5IUK2</accession>
<protein>
    <recommendedName>
        <fullName evidence="1">Ketol-acid reductoisomerase (NADP(+))</fullName>
        <shortName evidence="1">KARI</shortName>
        <ecNumber evidence="1">1.1.1.86</ecNumber>
    </recommendedName>
    <alternativeName>
        <fullName evidence="1">Acetohydroxy-acid isomeroreductase</fullName>
        <shortName evidence="1">AHIR</shortName>
    </alternativeName>
    <alternativeName>
        <fullName evidence="1">Alpha-keto-beta-hydroxylacyl reductoisomerase</fullName>
    </alternativeName>
    <alternativeName>
        <fullName evidence="1">Ketol-acid reductoisomerase type 1</fullName>
    </alternativeName>
    <alternativeName>
        <fullName evidence="1">Ketol-acid reductoisomerase type I</fullName>
    </alternativeName>
</protein>
<gene>
    <name evidence="1" type="primary">ilvC</name>
    <name type="ordered locus">SaurJH9_2093</name>
</gene>
<sequence length="334" mass="37014">MTTVYYDQDVKTDALQGKKIAVVGYGSQGHAHAQNLKDNGYDVVIGIRPGRSFDKAKEDGFDVFPVAEAVKQADVIMVLLPDEIQGDVYKNEIEPNLEKHNALAFAHGFNIHFGVIQPPADVDVFLVAPKGPGHLVRRTFVEGSAVPSLFGIQQDASGQARNIALSYAKGIGATRAGVIETTFKEETETDLFGEQAVLCGGVSKLIQSGFETLVEAGYQPELAYFEVLHEMKLIVDLMYEGGMENVRYSISNTAEFGDYVSGPRVITPDVKENMKAVLTDIQNGNFSNRFIEDNKNGFKEFYKLREEQHGHQIEKVGRELREMMPFIKSKSIEK</sequence>
<name>ILVC_STAA9</name>
<organism>
    <name type="scientific">Staphylococcus aureus (strain JH9)</name>
    <dbReference type="NCBI Taxonomy" id="359786"/>
    <lineage>
        <taxon>Bacteria</taxon>
        <taxon>Bacillati</taxon>
        <taxon>Bacillota</taxon>
        <taxon>Bacilli</taxon>
        <taxon>Bacillales</taxon>
        <taxon>Staphylococcaceae</taxon>
        <taxon>Staphylococcus</taxon>
    </lineage>
</organism>
<keyword id="KW-0028">Amino-acid biosynthesis</keyword>
<keyword id="KW-0100">Branched-chain amino acid biosynthesis</keyword>
<keyword id="KW-0460">Magnesium</keyword>
<keyword id="KW-0479">Metal-binding</keyword>
<keyword id="KW-0521">NADP</keyword>
<keyword id="KW-0560">Oxidoreductase</keyword>
<reference key="1">
    <citation type="submission" date="2007-05" db="EMBL/GenBank/DDBJ databases">
        <title>Complete sequence of chromosome of Staphylococcus aureus subsp. aureus JH9.</title>
        <authorList>
            <consortium name="US DOE Joint Genome Institute"/>
            <person name="Copeland A."/>
            <person name="Lucas S."/>
            <person name="Lapidus A."/>
            <person name="Barry K."/>
            <person name="Detter J.C."/>
            <person name="Glavina del Rio T."/>
            <person name="Hammon N."/>
            <person name="Israni S."/>
            <person name="Pitluck S."/>
            <person name="Chain P."/>
            <person name="Malfatti S."/>
            <person name="Shin M."/>
            <person name="Vergez L."/>
            <person name="Schmutz J."/>
            <person name="Larimer F."/>
            <person name="Land M."/>
            <person name="Hauser L."/>
            <person name="Kyrpides N."/>
            <person name="Kim E."/>
            <person name="Tomasz A."/>
            <person name="Richardson P."/>
        </authorList>
    </citation>
    <scope>NUCLEOTIDE SEQUENCE [LARGE SCALE GENOMIC DNA]</scope>
    <source>
        <strain>JH9</strain>
    </source>
</reference>
<comment type="function">
    <text evidence="1">Involved in the biosynthesis of branched-chain amino acids (BCAA). Catalyzes an alkyl-migration followed by a ketol-acid reduction of (S)-2-acetolactate (S2AL) to yield (R)-2,3-dihydroxy-isovalerate. In the isomerase reaction, S2AL is rearranged via a Mg-dependent methyl migration to produce 3-hydroxy-3-methyl-2-ketobutyrate (HMKB). In the reductase reaction, this 2-ketoacid undergoes a metal-dependent reduction by NADPH to yield (R)-2,3-dihydroxy-isovalerate.</text>
</comment>
<comment type="catalytic activity">
    <reaction evidence="1">
        <text>(2R)-2,3-dihydroxy-3-methylbutanoate + NADP(+) = (2S)-2-acetolactate + NADPH + H(+)</text>
        <dbReference type="Rhea" id="RHEA:22068"/>
        <dbReference type="ChEBI" id="CHEBI:15378"/>
        <dbReference type="ChEBI" id="CHEBI:49072"/>
        <dbReference type="ChEBI" id="CHEBI:57783"/>
        <dbReference type="ChEBI" id="CHEBI:58349"/>
        <dbReference type="ChEBI" id="CHEBI:58476"/>
        <dbReference type="EC" id="1.1.1.86"/>
    </reaction>
</comment>
<comment type="catalytic activity">
    <reaction evidence="1">
        <text>(2R,3R)-2,3-dihydroxy-3-methylpentanoate + NADP(+) = (S)-2-ethyl-2-hydroxy-3-oxobutanoate + NADPH + H(+)</text>
        <dbReference type="Rhea" id="RHEA:13493"/>
        <dbReference type="ChEBI" id="CHEBI:15378"/>
        <dbReference type="ChEBI" id="CHEBI:49256"/>
        <dbReference type="ChEBI" id="CHEBI:49258"/>
        <dbReference type="ChEBI" id="CHEBI:57783"/>
        <dbReference type="ChEBI" id="CHEBI:58349"/>
        <dbReference type="EC" id="1.1.1.86"/>
    </reaction>
</comment>
<comment type="cofactor">
    <cofactor evidence="1">
        <name>Mg(2+)</name>
        <dbReference type="ChEBI" id="CHEBI:18420"/>
    </cofactor>
    <text evidence="1">Binds 2 magnesium ions per subunit.</text>
</comment>
<comment type="pathway">
    <text evidence="1">Amino-acid biosynthesis; L-isoleucine biosynthesis; L-isoleucine from 2-oxobutanoate: step 2/4.</text>
</comment>
<comment type="pathway">
    <text evidence="1">Amino-acid biosynthesis; L-valine biosynthesis; L-valine from pyruvate: step 2/4.</text>
</comment>
<comment type="similarity">
    <text evidence="1">Belongs to the ketol-acid reductoisomerase family.</text>
</comment>
<proteinExistence type="inferred from homology"/>